<organism>
    <name type="scientific">Sus scrofa</name>
    <name type="common">Pig</name>
    <dbReference type="NCBI Taxonomy" id="9823"/>
    <lineage>
        <taxon>Eukaryota</taxon>
        <taxon>Metazoa</taxon>
        <taxon>Chordata</taxon>
        <taxon>Craniata</taxon>
        <taxon>Vertebrata</taxon>
        <taxon>Euteleostomi</taxon>
        <taxon>Mammalia</taxon>
        <taxon>Eutheria</taxon>
        <taxon>Laurasiatheria</taxon>
        <taxon>Artiodactyla</taxon>
        <taxon>Suina</taxon>
        <taxon>Suidae</taxon>
        <taxon>Sus</taxon>
    </lineage>
</organism>
<protein>
    <recommendedName>
        <fullName evidence="2">Aquaporin-1</fullName>
        <shortName>AQP-1</shortName>
    </recommendedName>
    <alternativeName>
        <fullName>Aquaporin-CHIP</fullName>
    </alternativeName>
</protein>
<feature type="chain" id="PRO_0000063922" description="Aquaporin-1">
    <location>
        <begin position="1"/>
        <end position="271"/>
    </location>
</feature>
<feature type="topological domain" description="Cytoplasmic" evidence="5">
    <location>
        <begin position="1"/>
        <end position="11"/>
    </location>
</feature>
<feature type="transmembrane region" description="Helical; Name=Helix 1" evidence="2">
    <location>
        <begin position="12"/>
        <end position="29"/>
    </location>
</feature>
<feature type="topological domain" description="Extracellular" evidence="5">
    <location>
        <begin position="30"/>
        <end position="48"/>
    </location>
</feature>
<feature type="transmembrane region" description="Helical; Name=Helix 2" evidence="2">
    <location>
        <begin position="49"/>
        <end position="67"/>
    </location>
</feature>
<feature type="topological domain" description="Cytoplasmic" evidence="5">
    <location>
        <begin position="68"/>
        <end position="70"/>
    </location>
</feature>
<feature type="intramembrane region" evidence="2">
    <location>
        <begin position="71"/>
        <end position="84"/>
    </location>
</feature>
<feature type="topological domain" description="Cytoplasmic" evidence="5">
    <location>
        <begin position="85"/>
        <end position="92"/>
    </location>
</feature>
<feature type="transmembrane region" description="Helical; Name=Helix 3" evidence="2">
    <location>
        <begin position="93"/>
        <end position="111"/>
    </location>
</feature>
<feature type="topological domain" description="Extracellular" evidence="5">
    <location>
        <begin position="112"/>
        <end position="135"/>
    </location>
</feature>
<feature type="transmembrane region" description="Helical; Name=Helix 4" evidence="2">
    <location>
        <begin position="136"/>
        <end position="155"/>
    </location>
</feature>
<feature type="topological domain" description="Cytoplasmic" evidence="5">
    <location>
        <begin position="156"/>
        <end position="165"/>
    </location>
</feature>
<feature type="transmembrane region" description="Helical; Name=Helix 5" evidence="2">
    <location>
        <begin position="166"/>
        <end position="183"/>
    </location>
</feature>
<feature type="topological domain" description="Extracellular" evidence="5">
    <location>
        <begin position="184"/>
        <end position="188"/>
    </location>
</feature>
<feature type="intramembrane region" evidence="2">
    <location>
        <begin position="189"/>
        <end position="201"/>
    </location>
</feature>
<feature type="topological domain" description="Extracellular" evidence="5">
    <location>
        <begin position="202"/>
        <end position="208"/>
    </location>
</feature>
<feature type="transmembrane region" description="Helical; Name=Helix 6" evidence="2">
    <location>
        <begin position="209"/>
        <end position="226"/>
    </location>
</feature>
<feature type="topological domain" description="Cytoplasmic" evidence="5">
    <location>
        <begin position="227"/>
        <end position="271"/>
    </location>
</feature>
<feature type="short sequence motif" description="NPA 1" evidence="2">
    <location>
        <begin position="78"/>
        <end position="80"/>
    </location>
</feature>
<feature type="short sequence motif" description="NPA 2" evidence="2">
    <location>
        <begin position="194"/>
        <end position="196"/>
    </location>
</feature>
<feature type="modified residue" description="Phosphoserine" evidence="3">
    <location>
        <position position="249"/>
    </location>
</feature>
<feature type="modified residue" description="Phosphotyrosine" evidence="3">
    <location>
        <position position="255"/>
    </location>
</feature>
<feature type="modified residue" description="Phosphoserine" evidence="3">
    <location>
        <position position="264"/>
    </location>
</feature>
<feature type="glycosylation site" description="N-linked (GlcNAc...) asparagine" evidence="4">
    <location>
        <position position="42"/>
    </location>
</feature>
<reference key="1">
    <citation type="submission" date="2004-03" db="EMBL/GenBank/DDBJ databases">
        <title>Cloning and expression of porcine aquaporin-1.</title>
        <authorList>
            <person name="Jin S."/>
            <person name="Liu Y."/>
            <person name="Wang Y."/>
            <person name="Yang H."/>
            <person name="Gao H."/>
            <person name="He C."/>
            <person name="Ma T."/>
        </authorList>
    </citation>
    <scope>NUCLEOTIDE SEQUENCE [MRNA]</scope>
    <source>
        <tissue>Kidney</tissue>
    </source>
</reference>
<dbReference type="EMBL" id="AY585335">
    <property type="protein sequence ID" value="AAS98212.1"/>
    <property type="molecule type" value="mRNA"/>
</dbReference>
<dbReference type="RefSeq" id="NP_999619.1">
    <property type="nucleotide sequence ID" value="NM_214454.1"/>
</dbReference>
<dbReference type="SMR" id="Q6PQZ1"/>
<dbReference type="FunCoup" id="Q6PQZ1">
    <property type="interactions" value="28"/>
</dbReference>
<dbReference type="STRING" id="9823.ENSSSCP00000060449"/>
<dbReference type="GlyCosmos" id="Q6PQZ1">
    <property type="glycosylation" value="1 site, No reported glycans"/>
</dbReference>
<dbReference type="GlyGen" id="Q6PQZ1">
    <property type="glycosylation" value="1 site"/>
</dbReference>
<dbReference type="PeptideAtlas" id="Q6PQZ1"/>
<dbReference type="GeneID" id="407773"/>
<dbReference type="KEGG" id="ssc:407773"/>
<dbReference type="CTD" id="358"/>
<dbReference type="InParanoid" id="Q6PQZ1"/>
<dbReference type="OrthoDB" id="3222at2759"/>
<dbReference type="Proteomes" id="UP000008227">
    <property type="component" value="Unplaced"/>
</dbReference>
<dbReference type="Proteomes" id="UP000314985">
    <property type="component" value="Unplaced"/>
</dbReference>
<dbReference type="Proteomes" id="UP000694570">
    <property type="component" value="Unplaced"/>
</dbReference>
<dbReference type="Proteomes" id="UP000694571">
    <property type="component" value="Unplaced"/>
</dbReference>
<dbReference type="Proteomes" id="UP000694720">
    <property type="component" value="Unplaced"/>
</dbReference>
<dbReference type="Proteomes" id="UP000694722">
    <property type="component" value="Unplaced"/>
</dbReference>
<dbReference type="Proteomes" id="UP000694723">
    <property type="component" value="Unplaced"/>
</dbReference>
<dbReference type="Proteomes" id="UP000694724">
    <property type="component" value="Unplaced"/>
</dbReference>
<dbReference type="Proteomes" id="UP000694725">
    <property type="component" value="Unplaced"/>
</dbReference>
<dbReference type="Proteomes" id="UP000694726">
    <property type="component" value="Unplaced"/>
</dbReference>
<dbReference type="Proteomes" id="UP000694727">
    <property type="component" value="Unplaced"/>
</dbReference>
<dbReference type="Proteomes" id="UP000694728">
    <property type="component" value="Unplaced"/>
</dbReference>
<dbReference type="GO" id="GO:0170014">
    <property type="term" value="C:ankyrin-1 complex"/>
    <property type="evidence" value="ECO:0000250"/>
    <property type="project" value="UniProtKB"/>
</dbReference>
<dbReference type="GO" id="GO:0045177">
    <property type="term" value="C:apical part of cell"/>
    <property type="evidence" value="ECO:0000250"/>
    <property type="project" value="UniProtKB"/>
</dbReference>
<dbReference type="GO" id="GO:0016324">
    <property type="term" value="C:apical plasma membrane"/>
    <property type="evidence" value="ECO:0000250"/>
    <property type="project" value="UniProtKB"/>
</dbReference>
<dbReference type="GO" id="GO:0009925">
    <property type="term" value="C:basal plasma membrane"/>
    <property type="evidence" value="ECO:0000250"/>
    <property type="project" value="UniProtKB"/>
</dbReference>
<dbReference type="GO" id="GO:0016323">
    <property type="term" value="C:basolateral plasma membrane"/>
    <property type="evidence" value="ECO:0000250"/>
    <property type="project" value="UniProtKB"/>
</dbReference>
<dbReference type="GO" id="GO:0005903">
    <property type="term" value="C:brush border"/>
    <property type="evidence" value="ECO:0000250"/>
    <property type="project" value="UniProtKB"/>
</dbReference>
<dbReference type="GO" id="GO:0031526">
    <property type="term" value="C:brush border membrane"/>
    <property type="evidence" value="ECO:0000250"/>
    <property type="project" value="UniProtKB"/>
</dbReference>
<dbReference type="GO" id="GO:0005737">
    <property type="term" value="C:cytoplasm"/>
    <property type="evidence" value="ECO:0000250"/>
    <property type="project" value="UniProtKB"/>
</dbReference>
<dbReference type="GO" id="GO:0031965">
    <property type="term" value="C:nuclear membrane"/>
    <property type="evidence" value="ECO:0000250"/>
    <property type="project" value="UniProtKB"/>
</dbReference>
<dbReference type="GO" id="GO:0005634">
    <property type="term" value="C:nucleus"/>
    <property type="evidence" value="ECO:0000250"/>
    <property type="project" value="UniProtKB"/>
</dbReference>
<dbReference type="GO" id="GO:0005886">
    <property type="term" value="C:plasma membrane"/>
    <property type="evidence" value="ECO:0000250"/>
    <property type="project" value="UniProtKB"/>
</dbReference>
<dbReference type="GO" id="GO:0042383">
    <property type="term" value="C:sarcolemma"/>
    <property type="evidence" value="ECO:0000250"/>
    <property type="project" value="UniProtKB"/>
</dbReference>
<dbReference type="GO" id="GO:0008519">
    <property type="term" value="F:ammonium channel activity"/>
    <property type="evidence" value="ECO:0000250"/>
    <property type="project" value="UniProtKB"/>
</dbReference>
<dbReference type="GO" id="GO:0035379">
    <property type="term" value="F:carbon dioxide transmembrane transporter activity"/>
    <property type="evidence" value="ECO:0000250"/>
    <property type="project" value="UniProtKB"/>
</dbReference>
<dbReference type="GO" id="GO:0015168">
    <property type="term" value="F:glycerol transmembrane transporter activity"/>
    <property type="evidence" value="ECO:0000250"/>
    <property type="project" value="UniProtKB"/>
</dbReference>
<dbReference type="GO" id="GO:0005223">
    <property type="term" value="F:intracellularly cGMP-activated cation channel activity"/>
    <property type="evidence" value="ECO:0000250"/>
    <property type="project" value="UniProtKB"/>
</dbReference>
<dbReference type="GO" id="GO:0030184">
    <property type="term" value="F:nitric oxide transmembrane transporter activity"/>
    <property type="evidence" value="ECO:0000250"/>
    <property type="project" value="UniProtKB"/>
</dbReference>
<dbReference type="GO" id="GO:0005267">
    <property type="term" value="F:potassium channel activity"/>
    <property type="evidence" value="ECO:0000250"/>
    <property type="project" value="UniProtKB"/>
</dbReference>
<dbReference type="GO" id="GO:0022857">
    <property type="term" value="F:transmembrane transporter activity"/>
    <property type="evidence" value="ECO:0000250"/>
    <property type="project" value="UniProtKB"/>
</dbReference>
<dbReference type="GO" id="GO:0015250">
    <property type="term" value="F:water channel activity"/>
    <property type="evidence" value="ECO:0000250"/>
    <property type="project" value="UniProtKB"/>
</dbReference>
<dbReference type="GO" id="GO:0005372">
    <property type="term" value="F:water transmembrane transporter activity"/>
    <property type="evidence" value="ECO:0000250"/>
    <property type="project" value="UniProtKB"/>
</dbReference>
<dbReference type="GO" id="GO:0072488">
    <property type="term" value="P:ammonium transmembrane transport"/>
    <property type="evidence" value="ECO:0000250"/>
    <property type="project" value="UniProtKB"/>
</dbReference>
<dbReference type="GO" id="GO:0035378">
    <property type="term" value="P:carbon dioxide transmembrane transport"/>
    <property type="evidence" value="ECO:0000250"/>
    <property type="project" value="UniProtKB"/>
</dbReference>
<dbReference type="GO" id="GO:0015670">
    <property type="term" value="P:carbon dioxide transport"/>
    <property type="evidence" value="ECO:0000250"/>
    <property type="project" value="UniProtKB"/>
</dbReference>
<dbReference type="GO" id="GO:0006884">
    <property type="term" value="P:cell volume homeostasis"/>
    <property type="evidence" value="ECO:0000250"/>
    <property type="project" value="UniProtKB"/>
</dbReference>
<dbReference type="GO" id="GO:0019725">
    <property type="term" value="P:cellular homeostasis"/>
    <property type="evidence" value="ECO:0000250"/>
    <property type="project" value="UniProtKB"/>
</dbReference>
<dbReference type="GO" id="GO:0071474">
    <property type="term" value="P:cellular hyperosmotic response"/>
    <property type="evidence" value="ECO:0000250"/>
    <property type="project" value="UniProtKB"/>
</dbReference>
<dbReference type="GO" id="GO:0071320">
    <property type="term" value="P:cellular response to cAMP"/>
    <property type="evidence" value="ECO:0000250"/>
    <property type="project" value="UniProtKB"/>
</dbReference>
<dbReference type="GO" id="GO:0071280">
    <property type="term" value="P:cellular response to copper ion"/>
    <property type="evidence" value="ECO:0000250"/>
    <property type="project" value="UniProtKB"/>
</dbReference>
<dbReference type="GO" id="GO:0071549">
    <property type="term" value="P:cellular response to dexamethasone stimulus"/>
    <property type="evidence" value="ECO:0000250"/>
    <property type="project" value="UniProtKB"/>
</dbReference>
<dbReference type="GO" id="GO:0070301">
    <property type="term" value="P:cellular response to hydrogen peroxide"/>
    <property type="evidence" value="ECO:0000250"/>
    <property type="project" value="UniProtKB"/>
</dbReference>
<dbReference type="GO" id="GO:0071456">
    <property type="term" value="P:cellular response to hypoxia"/>
    <property type="evidence" value="ECO:0000250"/>
    <property type="project" value="UniProtKB"/>
</dbReference>
<dbReference type="GO" id="GO:0071260">
    <property type="term" value="P:cellular response to mechanical stimulus"/>
    <property type="evidence" value="ECO:0000250"/>
    <property type="project" value="UniProtKB"/>
</dbReference>
<dbReference type="GO" id="GO:0071288">
    <property type="term" value="P:cellular response to mercury ion"/>
    <property type="evidence" value="ECO:0000250"/>
    <property type="project" value="UniProtKB"/>
</dbReference>
<dbReference type="GO" id="GO:0071300">
    <property type="term" value="P:cellular response to retinoic acid"/>
    <property type="evidence" value="ECO:0000250"/>
    <property type="project" value="UniProtKB"/>
</dbReference>
<dbReference type="GO" id="GO:0071472">
    <property type="term" value="P:cellular response to salt stress"/>
    <property type="evidence" value="ECO:0000250"/>
    <property type="project" value="UniProtKB"/>
</dbReference>
<dbReference type="GO" id="GO:0034644">
    <property type="term" value="P:cellular response to UV"/>
    <property type="evidence" value="ECO:0000250"/>
    <property type="project" value="UniProtKB"/>
</dbReference>
<dbReference type="GO" id="GO:0019934">
    <property type="term" value="P:cGMP-mediated signaling"/>
    <property type="evidence" value="ECO:0000250"/>
    <property type="project" value="UniProtKB"/>
</dbReference>
<dbReference type="GO" id="GO:0030950">
    <property type="term" value="P:establishment or maintenance of actin cytoskeleton polarity"/>
    <property type="evidence" value="ECO:0000250"/>
    <property type="project" value="UniProtKB"/>
</dbReference>
<dbReference type="GO" id="GO:0015793">
    <property type="term" value="P:glycerol transmembrane transport"/>
    <property type="evidence" value="ECO:0000250"/>
    <property type="project" value="UniProtKB"/>
</dbReference>
<dbReference type="GO" id="GO:0006972">
    <property type="term" value="P:hyperosmotic response"/>
    <property type="evidence" value="ECO:0000318"/>
    <property type="project" value="GO_Central"/>
</dbReference>
<dbReference type="GO" id="GO:0009992">
    <property type="term" value="P:intracellular water homeostasis"/>
    <property type="evidence" value="ECO:0000250"/>
    <property type="project" value="UniProtKB"/>
</dbReference>
<dbReference type="GO" id="GO:0021670">
    <property type="term" value="P:lateral ventricle development"/>
    <property type="evidence" value="ECO:0000250"/>
    <property type="project" value="UniProtKB"/>
</dbReference>
<dbReference type="GO" id="GO:0043066">
    <property type="term" value="P:negative regulation of apoptotic process"/>
    <property type="evidence" value="ECO:0000250"/>
    <property type="project" value="UniProtKB"/>
</dbReference>
<dbReference type="GO" id="GO:0030185">
    <property type="term" value="P:nitric oxide transport"/>
    <property type="evidence" value="ECO:0000250"/>
    <property type="project" value="UniProtKB"/>
</dbReference>
<dbReference type="GO" id="GO:0045766">
    <property type="term" value="P:positive regulation of angiogenesis"/>
    <property type="evidence" value="ECO:0000250"/>
    <property type="project" value="UniProtKB"/>
</dbReference>
<dbReference type="GO" id="GO:0048146">
    <property type="term" value="P:positive regulation of fibroblast proliferation"/>
    <property type="evidence" value="ECO:0000250"/>
    <property type="project" value="UniProtKB"/>
</dbReference>
<dbReference type="GO" id="GO:0046878">
    <property type="term" value="P:positive regulation of saliva secretion"/>
    <property type="evidence" value="ECO:0000250"/>
    <property type="project" value="UniProtKB"/>
</dbReference>
<dbReference type="GO" id="GO:0003097">
    <property type="term" value="P:renal water transport"/>
    <property type="evidence" value="ECO:0000250"/>
    <property type="project" value="UniProtKB"/>
</dbReference>
<dbReference type="GO" id="GO:0035377">
    <property type="term" value="P:transepithelial water transport"/>
    <property type="evidence" value="ECO:0000250"/>
    <property type="project" value="UniProtKB"/>
</dbReference>
<dbReference type="GO" id="GO:0006833">
    <property type="term" value="P:water transport"/>
    <property type="evidence" value="ECO:0000250"/>
    <property type="project" value="UniProtKB"/>
</dbReference>
<dbReference type="CDD" id="cd00333">
    <property type="entry name" value="MIP"/>
    <property type="match status" value="1"/>
</dbReference>
<dbReference type="FunFam" id="1.20.1080.10:FF:000012">
    <property type="entry name" value="Aquaporin-1"/>
    <property type="match status" value="1"/>
</dbReference>
<dbReference type="Gene3D" id="1.20.1080.10">
    <property type="entry name" value="Glycerol uptake facilitator protein"/>
    <property type="match status" value="1"/>
</dbReference>
<dbReference type="InterPro" id="IPR023271">
    <property type="entry name" value="Aquaporin-like"/>
</dbReference>
<dbReference type="InterPro" id="IPR023274">
    <property type="entry name" value="Aquaporin_1"/>
</dbReference>
<dbReference type="InterPro" id="IPR034294">
    <property type="entry name" value="Aquaporin_transptr"/>
</dbReference>
<dbReference type="InterPro" id="IPR000425">
    <property type="entry name" value="MIP"/>
</dbReference>
<dbReference type="InterPro" id="IPR022357">
    <property type="entry name" value="MIP_CS"/>
</dbReference>
<dbReference type="NCBIfam" id="TIGR00861">
    <property type="entry name" value="MIP"/>
    <property type="match status" value="1"/>
</dbReference>
<dbReference type="PANTHER" id="PTHR19139">
    <property type="entry name" value="AQUAPORIN TRANSPORTER"/>
    <property type="match status" value="1"/>
</dbReference>
<dbReference type="PANTHER" id="PTHR19139:SF161">
    <property type="entry name" value="AQUAPORIN-1"/>
    <property type="match status" value="1"/>
</dbReference>
<dbReference type="Pfam" id="PF00230">
    <property type="entry name" value="MIP"/>
    <property type="match status" value="1"/>
</dbReference>
<dbReference type="PRINTS" id="PR02013">
    <property type="entry name" value="AQUAPORIN1"/>
</dbReference>
<dbReference type="PRINTS" id="PR00783">
    <property type="entry name" value="MINTRINSICP"/>
</dbReference>
<dbReference type="SUPFAM" id="SSF81338">
    <property type="entry name" value="Aquaporin-like"/>
    <property type="match status" value="1"/>
</dbReference>
<dbReference type="PROSITE" id="PS00221">
    <property type="entry name" value="MIP"/>
    <property type="match status" value="1"/>
</dbReference>
<proteinExistence type="evidence at transcript level"/>
<accession>Q6PQZ1</accession>
<name>AQP1_PIG</name>
<comment type="function">
    <text evidence="2">Forms a water channel that facilitates the transport of water across cell membranes, playing a crucial role in water homeostasis in various tissues. Could also be permeable to small solutes including hydrogen peroxide, glycerol and gases such as amonnia (NH3), nitric oxide (NO) and carbon dioxide (CO2). Recruited to the ankyrin-1 complex, a multiprotein complex of the erythrocyte membrane, it could be part of a CO2 metabolon, linking facilitated diffusion of CO2 across the membrane, anion exchange of Cl(-)/HCO3(-) and interconversion of dissolved CO2 and carbonic acid in the cytosol. In vitro, it shows non-selective gated cation channel activity and may be permeable to cations like K(+) and Na(+) in vivo.</text>
</comment>
<comment type="catalytic activity">
    <reaction evidence="2">
        <text>H2O(in) = H2O(out)</text>
        <dbReference type="Rhea" id="RHEA:29667"/>
        <dbReference type="ChEBI" id="CHEBI:15377"/>
    </reaction>
</comment>
<comment type="catalytic activity">
    <reaction evidence="2">
        <text>nitric oxide(out) = nitric oxide(in)</text>
        <dbReference type="Rhea" id="RHEA:74895"/>
        <dbReference type="ChEBI" id="CHEBI:16480"/>
    </reaction>
</comment>
<comment type="catalytic activity">
    <reaction evidence="2">
        <text>CO2(out) = CO2(in)</text>
        <dbReference type="Rhea" id="RHEA:74891"/>
        <dbReference type="ChEBI" id="CHEBI:16526"/>
    </reaction>
</comment>
<comment type="catalytic activity">
    <reaction evidence="2">
        <text>glycerol(in) = glycerol(out)</text>
        <dbReference type="Rhea" id="RHEA:29675"/>
        <dbReference type="ChEBI" id="CHEBI:17754"/>
    </reaction>
</comment>
<comment type="catalytic activity">
    <reaction evidence="2">
        <text>H2O2(out) = H2O2(in)</text>
        <dbReference type="Rhea" id="RHEA:74375"/>
        <dbReference type="ChEBI" id="CHEBI:16240"/>
    </reaction>
</comment>
<comment type="catalytic activity">
    <reaction evidence="2">
        <text>K(+)(in) = K(+)(out)</text>
        <dbReference type="Rhea" id="RHEA:29463"/>
        <dbReference type="ChEBI" id="CHEBI:29103"/>
    </reaction>
</comment>
<comment type="catalytic activity">
    <reaction evidence="2">
        <text>Na(+)(in) = Na(+)(out)</text>
        <dbReference type="Rhea" id="RHEA:34963"/>
        <dbReference type="ChEBI" id="CHEBI:29101"/>
    </reaction>
</comment>
<comment type="subunit">
    <text evidence="1 2 3">Homotetramer; each monomer provides an independent water pore. Component of the ankyrin-1 complex in the erythrocyte, composed of ANK1, RHCE, RHAG, SLC4A1, EPB42, GYPA, GYPB and AQP1 (By similarity). Interacts with EPHB2; involved in endolymph production in the inner ear (By similarity). Identified in a complex with STOM. Interacts (via the N-terminal) with ANK1 (via ANK 1-5 repeats). Interacts (via the C-terminal) with EPB42 (By similarity).</text>
</comment>
<comment type="subcellular location">
    <subcellularLocation>
        <location evidence="2">Cell membrane</location>
        <topology evidence="2">Multi-pass membrane protein</topology>
    </subcellularLocation>
</comment>
<comment type="domain">
    <text evidence="2">Aquaporins contain two tandem repeats each containing three membrane-spanning domains and a pore-forming loop with the signature motif Asn-Pro-Ala (NPA).</text>
</comment>
<comment type="similarity">
    <text evidence="5">Belongs to the MIP/aquaporin (TC 1.A.8) family.</text>
</comment>
<evidence type="ECO:0000250" key="1"/>
<evidence type="ECO:0000250" key="2">
    <source>
        <dbReference type="UniProtKB" id="P29972"/>
    </source>
</evidence>
<evidence type="ECO:0000250" key="3">
    <source>
        <dbReference type="UniProtKB" id="Q02013"/>
    </source>
</evidence>
<evidence type="ECO:0000255" key="4"/>
<evidence type="ECO:0000305" key="5"/>
<sequence>MASEFKKKIFWRAVVAEFLAMTLFIFISIGSALGFQYPVRNNQTSGAAQDNVKVSLAFGLSIATLAQSVGHISGAHLNPAVTLGLLLSCQISVLRAVMYIIAQCVGAIVATAILSGITSSLPGNSLGLNSLAPGVDSGQGLGIEIIGTLQLVLCVLATTDRRRRDLGGSAPLAIGFSVALGHLLAIDYTGCGINPARSFGSAVITHNFQDHWVFWVGPFIGGALAVLIYDFILAPRSSDLTDRVKVWTSGQVEEYDLDGDDINSRVEMKPK</sequence>
<gene>
    <name evidence="2" type="primary">AQP1</name>
</gene>
<keyword id="KW-1003">Cell membrane</keyword>
<keyword id="KW-0325">Glycoprotein</keyword>
<keyword id="KW-0472">Membrane</keyword>
<keyword id="KW-0597">Phosphoprotein</keyword>
<keyword id="KW-1185">Reference proteome</keyword>
<keyword id="KW-0677">Repeat</keyword>
<keyword id="KW-0812">Transmembrane</keyword>
<keyword id="KW-1133">Transmembrane helix</keyword>
<keyword id="KW-0813">Transport</keyword>